<feature type="chain" id="PRO_0000347751" description="Alanine--tRNA ligase">
    <location>
        <begin position="1"/>
        <end position="884"/>
    </location>
</feature>
<feature type="binding site" evidence="1">
    <location>
        <position position="562"/>
    </location>
    <ligand>
        <name>Zn(2+)</name>
        <dbReference type="ChEBI" id="CHEBI:29105"/>
    </ligand>
</feature>
<feature type="binding site" evidence="1">
    <location>
        <position position="566"/>
    </location>
    <ligand>
        <name>Zn(2+)</name>
        <dbReference type="ChEBI" id="CHEBI:29105"/>
    </ligand>
</feature>
<feature type="binding site" evidence="1">
    <location>
        <position position="674"/>
    </location>
    <ligand>
        <name>Zn(2+)</name>
        <dbReference type="ChEBI" id="CHEBI:29105"/>
    </ligand>
</feature>
<feature type="binding site" evidence="1">
    <location>
        <position position="678"/>
    </location>
    <ligand>
        <name>Zn(2+)</name>
        <dbReference type="ChEBI" id="CHEBI:29105"/>
    </ligand>
</feature>
<name>SYA_RHIJ3</name>
<evidence type="ECO:0000255" key="1">
    <source>
        <dbReference type="HAMAP-Rule" id="MF_00036"/>
    </source>
</evidence>
<reference key="1">
    <citation type="journal article" date="2006" name="Genome Biol.">
        <title>The genome of Rhizobium leguminosarum has recognizable core and accessory components.</title>
        <authorList>
            <person name="Young J.P.W."/>
            <person name="Crossman L.C."/>
            <person name="Johnston A.W.B."/>
            <person name="Thomson N.R."/>
            <person name="Ghazoui Z.F."/>
            <person name="Hull K.H."/>
            <person name="Wexler M."/>
            <person name="Curson A.R.J."/>
            <person name="Todd J.D."/>
            <person name="Poole P.S."/>
            <person name="Mauchline T.H."/>
            <person name="East A.K."/>
            <person name="Quail M.A."/>
            <person name="Churcher C."/>
            <person name="Arrowsmith C."/>
            <person name="Cherevach I."/>
            <person name="Chillingworth T."/>
            <person name="Clarke K."/>
            <person name="Cronin A."/>
            <person name="Davis P."/>
            <person name="Fraser A."/>
            <person name="Hance Z."/>
            <person name="Hauser H."/>
            <person name="Jagels K."/>
            <person name="Moule S."/>
            <person name="Mungall K."/>
            <person name="Norbertczak H."/>
            <person name="Rabbinowitsch E."/>
            <person name="Sanders M."/>
            <person name="Simmonds M."/>
            <person name="Whitehead S."/>
            <person name="Parkhill J."/>
        </authorList>
    </citation>
    <scope>NUCLEOTIDE SEQUENCE [LARGE SCALE GENOMIC DNA]</scope>
    <source>
        <strain>DSM 114642 / LMG 32736 / 3841</strain>
    </source>
</reference>
<accession>Q1MFZ9</accession>
<proteinExistence type="inferred from homology"/>
<gene>
    <name evidence="1" type="primary">alaS</name>
    <name type="ordered locus">RL2636</name>
</gene>
<sequence length="884" mass="95171">MSGVNDIRSTFLDYFKKNGHEIVPSSPLVPRNDPTLMFTNAGMVQFKNVFTGLEKRPYSTATTSQKCVRAGGKHNDLDNVGYTARHLTFFEMLGNFSFGDYFKENAIELAWKLVTEGFDLPKNRLLVTVYSEDEEAATLWKKIAGFSDDKIIRISTSDNFWQMGDTGPCGPCSEIFIDQGENVWGGPPGSPEEDGDRFLEFWNLVFMQFEQTEPGVRNPLPRPSIDTGMGLERMACILQGVQSVFDTDLFRTLIGTIEDTMGVKAEGSASHRVIADHLRSSAFLIADGVLPSNEGRGYVLRRIMRRAMRHAQLLGAKEPLVYKLLPTLVQQMGRAYPELVRAEALISETLKLEENRFRKTLERGLSLLSDATTDLAKGDMLDGETAFKLYDTYGFPLDLTQDALRAREIGVDISGFTDAMQRQKAEARSHWAGSGEKATETVWFELKEKHGATEFLGYDTETAEGVVQAIVKDGAVAAEASAGDKVQIVVSQTPFYGESGGQMGDTGVISSDHGKIEISDTQKRGEGLFVHQGTVVDGVFKDGDAVVLTVDHARRSRLRANHSATHLLHEALREVLGTHVAQKGSLVAPERLRFDVSHPKPMSAEELKIVEDMANEIVLQNSPVTTRLMSVDDAIAEGAMALFGEKYGDEVRVVAMGEGVRGAKAGKPYSIELCGGTHVGATGQIGLIRVLGESAVGAGVRRIEAVTGESAREYLAEQDERVKTLAASLKVQPGEVLSRVEALMDERRKLEKELADAKRKLAMGGGQGGSVDAVREVAGVKFLGKAISGVDPKDLKGLADDGKTSIGSGVVALVGVSDDGKASAVVAVTPDLVQRYSAVDLVRIASAALGGKGGGGRPDMAQAGGPDGSKADEAIEAVAVALAG</sequence>
<protein>
    <recommendedName>
        <fullName evidence="1">Alanine--tRNA ligase</fullName>
        <ecNumber evidence="1">6.1.1.7</ecNumber>
    </recommendedName>
    <alternativeName>
        <fullName evidence="1">Alanyl-tRNA synthetase</fullName>
        <shortName evidence="1">AlaRS</shortName>
    </alternativeName>
</protein>
<keyword id="KW-0030">Aminoacyl-tRNA synthetase</keyword>
<keyword id="KW-0067">ATP-binding</keyword>
<keyword id="KW-0963">Cytoplasm</keyword>
<keyword id="KW-0436">Ligase</keyword>
<keyword id="KW-0479">Metal-binding</keyword>
<keyword id="KW-0547">Nucleotide-binding</keyword>
<keyword id="KW-0648">Protein biosynthesis</keyword>
<keyword id="KW-0694">RNA-binding</keyword>
<keyword id="KW-0820">tRNA-binding</keyword>
<keyword id="KW-0862">Zinc</keyword>
<organism>
    <name type="scientific">Rhizobium johnstonii (strain DSM 114642 / LMG 32736 / 3841)</name>
    <name type="common">Rhizobium leguminosarum bv. viciae</name>
    <dbReference type="NCBI Taxonomy" id="216596"/>
    <lineage>
        <taxon>Bacteria</taxon>
        <taxon>Pseudomonadati</taxon>
        <taxon>Pseudomonadota</taxon>
        <taxon>Alphaproteobacteria</taxon>
        <taxon>Hyphomicrobiales</taxon>
        <taxon>Rhizobiaceae</taxon>
        <taxon>Rhizobium/Agrobacterium group</taxon>
        <taxon>Rhizobium</taxon>
        <taxon>Rhizobium johnstonii</taxon>
    </lineage>
</organism>
<dbReference type="EC" id="6.1.1.7" evidence="1"/>
<dbReference type="EMBL" id="AM236080">
    <property type="protein sequence ID" value="CAK08124.1"/>
    <property type="molecule type" value="Genomic_DNA"/>
</dbReference>
<dbReference type="RefSeq" id="WP_011652179.1">
    <property type="nucleotide sequence ID" value="NC_008380.1"/>
</dbReference>
<dbReference type="SMR" id="Q1MFZ9"/>
<dbReference type="EnsemblBacteria" id="CAK08124">
    <property type="protein sequence ID" value="CAK08124"/>
    <property type="gene ID" value="RL2636"/>
</dbReference>
<dbReference type="KEGG" id="rle:RL2636"/>
<dbReference type="eggNOG" id="COG0013">
    <property type="taxonomic scope" value="Bacteria"/>
</dbReference>
<dbReference type="HOGENOM" id="CLU_004485_1_1_5"/>
<dbReference type="Proteomes" id="UP000006575">
    <property type="component" value="Chromosome"/>
</dbReference>
<dbReference type="GO" id="GO:0005829">
    <property type="term" value="C:cytosol"/>
    <property type="evidence" value="ECO:0007669"/>
    <property type="project" value="TreeGrafter"/>
</dbReference>
<dbReference type="GO" id="GO:0004813">
    <property type="term" value="F:alanine-tRNA ligase activity"/>
    <property type="evidence" value="ECO:0007669"/>
    <property type="project" value="UniProtKB-UniRule"/>
</dbReference>
<dbReference type="GO" id="GO:0002161">
    <property type="term" value="F:aminoacyl-tRNA deacylase activity"/>
    <property type="evidence" value="ECO:0007669"/>
    <property type="project" value="TreeGrafter"/>
</dbReference>
<dbReference type="GO" id="GO:0005524">
    <property type="term" value="F:ATP binding"/>
    <property type="evidence" value="ECO:0007669"/>
    <property type="project" value="UniProtKB-UniRule"/>
</dbReference>
<dbReference type="GO" id="GO:0000049">
    <property type="term" value="F:tRNA binding"/>
    <property type="evidence" value="ECO:0007669"/>
    <property type="project" value="UniProtKB-KW"/>
</dbReference>
<dbReference type="GO" id="GO:0008270">
    <property type="term" value="F:zinc ion binding"/>
    <property type="evidence" value="ECO:0007669"/>
    <property type="project" value="UniProtKB-UniRule"/>
</dbReference>
<dbReference type="GO" id="GO:0006419">
    <property type="term" value="P:alanyl-tRNA aminoacylation"/>
    <property type="evidence" value="ECO:0007669"/>
    <property type="project" value="UniProtKB-UniRule"/>
</dbReference>
<dbReference type="GO" id="GO:0045892">
    <property type="term" value="P:negative regulation of DNA-templated transcription"/>
    <property type="evidence" value="ECO:0007669"/>
    <property type="project" value="TreeGrafter"/>
</dbReference>
<dbReference type="CDD" id="cd00673">
    <property type="entry name" value="AlaRS_core"/>
    <property type="match status" value="1"/>
</dbReference>
<dbReference type="FunFam" id="2.40.30.130:FF:000001">
    <property type="entry name" value="Alanine--tRNA ligase"/>
    <property type="match status" value="1"/>
</dbReference>
<dbReference type="FunFam" id="3.10.310.40:FF:000001">
    <property type="entry name" value="Alanine--tRNA ligase"/>
    <property type="match status" value="1"/>
</dbReference>
<dbReference type="FunFam" id="3.30.54.20:FF:000001">
    <property type="entry name" value="Alanine--tRNA ligase"/>
    <property type="match status" value="1"/>
</dbReference>
<dbReference type="FunFam" id="3.30.930.10:FF:000004">
    <property type="entry name" value="Alanine--tRNA ligase"/>
    <property type="match status" value="1"/>
</dbReference>
<dbReference type="FunFam" id="3.30.980.10:FF:000004">
    <property type="entry name" value="Alanine--tRNA ligase, cytoplasmic"/>
    <property type="match status" value="1"/>
</dbReference>
<dbReference type="Gene3D" id="2.40.30.130">
    <property type="match status" value="1"/>
</dbReference>
<dbReference type="Gene3D" id="3.10.310.40">
    <property type="match status" value="1"/>
</dbReference>
<dbReference type="Gene3D" id="3.30.54.20">
    <property type="match status" value="1"/>
</dbReference>
<dbReference type="Gene3D" id="6.10.250.550">
    <property type="match status" value="1"/>
</dbReference>
<dbReference type="Gene3D" id="3.30.930.10">
    <property type="entry name" value="Bira Bifunctional Protein, Domain 2"/>
    <property type="match status" value="1"/>
</dbReference>
<dbReference type="Gene3D" id="3.30.980.10">
    <property type="entry name" value="Threonyl-trna Synthetase, Chain A, domain 2"/>
    <property type="match status" value="1"/>
</dbReference>
<dbReference type="HAMAP" id="MF_00036_B">
    <property type="entry name" value="Ala_tRNA_synth_B"/>
    <property type="match status" value="1"/>
</dbReference>
<dbReference type="InterPro" id="IPR045864">
    <property type="entry name" value="aa-tRNA-synth_II/BPL/LPL"/>
</dbReference>
<dbReference type="InterPro" id="IPR002318">
    <property type="entry name" value="Ala-tRNA-lgiase_IIc"/>
</dbReference>
<dbReference type="InterPro" id="IPR018162">
    <property type="entry name" value="Ala-tRNA-ligase_IIc_anticod-bd"/>
</dbReference>
<dbReference type="InterPro" id="IPR018165">
    <property type="entry name" value="Ala-tRNA-synth_IIc_core"/>
</dbReference>
<dbReference type="InterPro" id="IPR018164">
    <property type="entry name" value="Ala-tRNA-synth_IIc_N"/>
</dbReference>
<dbReference type="InterPro" id="IPR050058">
    <property type="entry name" value="Ala-tRNA_ligase"/>
</dbReference>
<dbReference type="InterPro" id="IPR023033">
    <property type="entry name" value="Ala_tRNA_ligase_euk/bac"/>
</dbReference>
<dbReference type="InterPro" id="IPR003156">
    <property type="entry name" value="DHHA1_dom"/>
</dbReference>
<dbReference type="InterPro" id="IPR018163">
    <property type="entry name" value="Thr/Ala-tRNA-synth_IIc_edit"/>
</dbReference>
<dbReference type="InterPro" id="IPR009000">
    <property type="entry name" value="Transl_B-barrel_sf"/>
</dbReference>
<dbReference type="InterPro" id="IPR012947">
    <property type="entry name" value="tRNA_SAD"/>
</dbReference>
<dbReference type="NCBIfam" id="TIGR00344">
    <property type="entry name" value="alaS"/>
    <property type="match status" value="1"/>
</dbReference>
<dbReference type="PANTHER" id="PTHR11777:SF9">
    <property type="entry name" value="ALANINE--TRNA LIGASE, CYTOPLASMIC"/>
    <property type="match status" value="1"/>
</dbReference>
<dbReference type="PANTHER" id="PTHR11777">
    <property type="entry name" value="ALANYL-TRNA SYNTHETASE"/>
    <property type="match status" value="1"/>
</dbReference>
<dbReference type="Pfam" id="PF02272">
    <property type="entry name" value="DHHA1"/>
    <property type="match status" value="1"/>
</dbReference>
<dbReference type="Pfam" id="PF01411">
    <property type="entry name" value="tRNA-synt_2c"/>
    <property type="match status" value="1"/>
</dbReference>
<dbReference type="Pfam" id="PF07973">
    <property type="entry name" value="tRNA_SAD"/>
    <property type="match status" value="1"/>
</dbReference>
<dbReference type="PRINTS" id="PR00980">
    <property type="entry name" value="TRNASYNTHALA"/>
</dbReference>
<dbReference type="SMART" id="SM00863">
    <property type="entry name" value="tRNA_SAD"/>
    <property type="match status" value="1"/>
</dbReference>
<dbReference type="SUPFAM" id="SSF55681">
    <property type="entry name" value="Class II aaRS and biotin synthetases"/>
    <property type="match status" value="1"/>
</dbReference>
<dbReference type="SUPFAM" id="SSF101353">
    <property type="entry name" value="Putative anticodon-binding domain of alanyl-tRNA synthetase (AlaRS)"/>
    <property type="match status" value="1"/>
</dbReference>
<dbReference type="SUPFAM" id="SSF55186">
    <property type="entry name" value="ThrRS/AlaRS common domain"/>
    <property type="match status" value="1"/>
</dbReference>
<dbReference type="SUPFAM" id="SSF50447">
    <property type="entry name" value="Translation proteins"/>
    <property type="match status" value="1"/>
</dbReference>
<dbReference type="PROSITE" id="PS50860">
    <property type="entry name" value="AA_TRNA_LIGASE_II_ALA"/>
    <property type="match status" value="1"/>
</dbReference>
<comment type="function">
    <text evidence="1">Catalyzes the attachment of alanine to tRNA(Ala) in a two-step reaction: alanine is first activated by ATP to form Ala-AMP and then transferred to the acceptor end of tRNA(Ala). Also edits incorrectly charged Ser-tRNA(Ala) and Gly-tRNA(Ala) via its editing domain.</text>
</comment>
<comment type="catalytic activity">
    <reaction evidence="1">
        <text>tRNA(Ala) + L-alanine + ATP = L-alanyl-tRNA(Ala) + AMP + diphosphate</text>
        <dbReference type="Rhea" id="RHEA:12540"/>
        <dbReference type="Rhea" id="RHEA-COMP:9657"/>
        <dbReference type="Rhea" id="RHEA-COMP:9923"/>
        <dbReference type="ChEBI" id="CHEBI:30616"/>
        <dbReference type="ChEBI" id="CHEBI:33019"/>
        <dbReference type="ChEBI" id="CHEBI:57972"/>
        <dbReference type="ChEBI" id="CHEBI:78442"/>
        <dbReference type="ChEBI" id="CHEBI:78497"/>
        <dbReference type="ChEBI" id="CHEBI:456215"/>
        <dbReference type="EC" id="6.1.1.7"/>
    </reaction>
</comment>
<comment type="cofactor">
    <cofactor evidence="1">
        <name>Zn(2+)</name>
        <dbReference type="ChEBI" id="CHEBI:29105"/>
    </cofactor>
    <text evidence="1">Binds 1 zinc ion per subunit.</text>
</comment>
<comment type="subcellular location">
    <subcellularLocation>
        <location evidence="1">Cytoplasm</location>
    </subcellularLocation>
</comment>
<comment type="domain">
    <text evidence="1">Consists of three domains; the N-terminal catalytic domain, the editing domain and the C-terminal C-Ala domain. The editing domain removes incorrectly charged amino acids, while the C-Ala domain, along with tRNA(Ala), serves as a bridge to cooperatively bring together the editing and aminoacylation centers thus stimulating deacylation of misacylated tRNAs.</text>
</comment>
<comment type="similarity">
    <text evidence="1">Belongs to the class-II aminoacyl-tRNA synthetase family.</text>
</comment>